<feature type="chain" id="PRO_1000019775" description="Serine--tRNA ligase">
    <location>
        <begin position="1"/>
        <end position="426"/>
    </location>
</feature>
<feature type="region of interest" description="Disordered" evidence="2">
    <location>
        <begin position="41"/>
        <end position="64"/>
    </location>
</feature>
<feature type="compositionally biased region" description="Polar residues" evidence="2">
    <location>
        <begin position="41"/>
        <end position="60"/>
    </location>
</feature>
<feature type="binding site" evidence="1">
    <location>
        <begin position="233"/>
        <end position="235"/>
    </location>
    <ligand>
        <name>L-serine</name>
        <dbReference type="ChEBI" id="CHEBI:33384"/>
    </ligand>
</feature>
<feature type="binding site" evidence="1">
    <location>
        <begin position="264"/>
        <end position="266"/>
    </location>
    <ligand>
        <name>ATP</name>
        <dbReference type="ChEBI" id="CHEBI:30616"/>
    </ligand>
</feature>
<feature type="binding site" evidence="1">
    <location>
        <position position="287"/>
    </location>
    <ligand>
        <name>L-serine</name>
        <dbReference type="ChEBI" id="CHEBI:33384"/>
    </ligand>
</feature>
<feature type="binding site" evidence="1">
    <location>
        <begin position="351"/>
        <end position="354"/>
    </location>
    <ligand>
        <name>ATP</name>
        <dbReference type="ChEBI" id="CHEBI:30616"/>
    </ligand>
</feature>
<feature type="binding site" evidence="1">
    <location>
        <position position="387"/>
    </location>
    <ligand>
        <name>L-serine</name>
        <dbReference type="ChEBI" id="CHEBI:33384"/>
    </ligand>
</feature>
<gene>
    <name evidence="1" type="primary">serS</name>
    <name type="ordered locus">PFL_3876</name>
</gene>
<sequence>MLDSKLLRSNLQDVADRLASRGFALDVARIEALEEQRKTVQTRTEQLQAERNARSKSIGQAKQRGEDIAPLMADVERMGNELSSGKAELENIQSELDSILFGIPNLPHESVPVGEDEDGNVEVRRWGTPTAFDFPIKDHVALGETHGWLDFETAAKLSGARFALLRGPIARLHRALAQFMINLHTGEHGYEEAYTPYLVQAPALVGTSQLPKFEEDLFKITREGEADLYLIPTAEVSLTNIVAGEILDAKQLPLKFVAHTPCFRSEAGASGRDTRGMIRQHQFDKVEMVQVVEPSTSMEALEGLTANAEKVLQLLQLPYRVLALCTGDMGFSAVKTYDLEVWVPSQDKYREISSCSNCGDFQARRMQARFRNPETGKPELVHTLNGSGLAVGRTLVAVLENYQQADGSIRVPDVLKPYMGGLEVIG</sequence>
<dbReference type="EC" id="6.1.1.11" evidence="1"/>
<dbReference type="EMBL" id="CP000076">
    <property type="protein sequence ID" value="AAY93140.1"/>
    <property type="molecule type" value="Genomic_DNA"/>
</dbReference>
<dbReference type="RefSeq" id="WP_011062164.1">
    <property type="nucleotide sequence ID" value="NC_004129.6"/>
</dbReference>
<dbReference type="SMR" id="Q4K9V7"/>
<dbReference type="STRING" id="220664.PFL_3876"/>
<dbReference type="KEGG" id="pfl:PFL_3876"/>
<dbReference type="PATRIC" id="fig|220664.5.peg.3971"/>
<dbReference type="eggNOG" id="COG0172">
    <property type="taxonomic scope" value="Bacteria"/>
</dbReference>
<dbReference type="HOGENOM" id="CLU_023797_1_1_6"/>
<dbReference type="UniPathway" id="UPA00906">
    <property type="reaction ID" value="UER00895"/>
</dbReference>
<dbReference type="Proteomes" id="UP000008540">
    <property type="component" value="Chromosome"/>
</dbReference>
<dbReference type="GO" id="GO:0005737">
    <property type="term" value="C:cytoplasm"/>
    <property type="evidence" value="ECO:0007669"/>
    <property type="project" value="UniProtKB-SubCell"/>
</dbReference>
<dbReference type="GO" id="GO:0005524">
    <property type="term" value="F:ATP binding"/>
    <property type="evidence" value="ECO:0007669"/>
    <property type="project" value="UniProtKB-UniRule"/>
</dbReference>
<dbReference type="GO" id="GO:0004828">
    <property type="term" value="F:serine-tRNA ligase activity"/>
    <property type="evidence" value="ECO:0007669"/>
    <property type="project" value="UniProtKB-UniRule"/>
</dbReference>
<dbReference type="GO" id="GO:0016260">
    <property type="term" value="P:selenocysteine biosynthetic process"/>
    <property type="evidence" value="ECO:0007669"/>
    <property type="project" value="UniProtKB-UniRule"/>
</dbReference>
<dbReference type="GO" id="GO:0006434">
    <property type="term" value="P:seryl-tRNA aminoacylation"/>
    <property type="evidence" value="ECO:0007669"/>
    <property type="project" value="UniProtKB-UniRule"/>
</dbReference>
<dbReference type="CDD" id="cd00770">
    <property type="entry name" value="SerRS_core"/>
    <property type="match status" value="1"/>
</dbReference>
<dbReference type="Gene3D" id="3.30.930.10">
    <property type="entry name" value="Bira Bifunctional Protein, Domain 2"/>
    <property type="match status" value="1"/>
</dbReference>
<dbReference type="Gene3D" id="1.10.287.40">
    <property type="entry name" value="Serine-tRNA synthetase, tRNA binding domain"/>
    <property type="match status" value="1"/>
</dbReference>
<dbReference type="HAMAP" id="MF_00176">
    <property type="entry name" value="Ser_tRNA_synth_type1"/>
    <property type="match status" value="1"/>
</dbReference>
<dbReference type="InterPro" id="IPR002314">
    <property type="entry name" value="aa-tRNA-synt_IIb"/>
</dbReference>
<dbReference type="InterPro" id="IPR006195">
    <property type="entry name" value="aa-tRNA-synth_II"/>
</dbReference>
<dbReference type="InterPro" id="IPR045864">
    <property type="entry name" value="aa-tRNA-synth_II/BPL/LPL"/>
</dbReference>
<dbReference type="InterPro" id="IPR002317">
    <property type="entry name" value="Ser-tRNA-ligase_type_1"/>
</dbReference>
<dbReference type="InterPro" id="IPR015866">
    <property type="entry name" value="Ser-tRNA-synth_1_N"/>
</dbReference>
<dbReference type="InterPro" id="IPR042103">
    <property type="entry name" value="SerRS_1_N_sf"/>
</dbReference>
<dbReference type="InterPro" id="IPR033729">
    <property type="entry name" value="SerRS_core"/>
</dbReference>
<dbReference type="InterPro" id="IPR010978">
    <property type="entry name" value="tRNA-bd_arm"/>
</dbReference>
<dbReference type="NCBIfam" id="TIGR00414">
    <property type="entry name" value="serS"/>
    <property type="match status" value="1"/>
</dbReference>
<dbReference type="PANTHER" id="PTHR43697:SF1">
    <property type="entry name" value="SERINE--TRNA LIGASE"/>
    <property type="match status" value="1"/>
</dbReference>
<dbReference type="PANTHER" id="PTHR43697">
    <property type="entry name" value="SERYL-TRNA SYNTHETASE"/>
    <property type="match status" value="1"/>
</dbReference>
<dbReference type="Pfam" id="PF02403">
    <property type="entry name" value="Seryl_tRNA_N"/>
    <property type="match status" value="1"/>
</dbReference>
<dbReference type="Pfam" id="PF00587">
    <property type="entry name" value="tRNA-synt_2b"/>
    <property type="match status" value="1"/>
</dbReference>
<dbReference type="PIRSF" id="PIRSF001529">
    <property type="entry name" value="Ser-tRNA-synth_IIa"/>
    <property type="match status" value="1"/>
</dbReference>
<dbReference type="PRINTS" id="PR00981">
    <property type="entry name" value="TRNASYNTHSER"/>
</dbReference>
<dbReference type="SUPFAM" id="SSF55681">
    <property type="entry name" value="Class II aaRS and biotin synthetases"/>
    <property type="match status" value="1"/>
</dbReference>
<dbReference type="SUPFAM" id="SSF46589">
    <property type="entry name" value="tRNA-binding arm"/>
    <property type="match status" value="1"/>
</dbReference>
<dbReference type="PROSITE" id="PS50862">
    <property type="entry name" value="AA_TRNA_LIGASE_II"/>
    <property type="match status" value="1"/>
</dbReference>
<protein>
    <recommendedName>
        <fullName evidence="1">Serine--tRNA ligase</fullName>
        <ecNumber evidence="1">6.1.1.11</ecNumber>
    </recommendedName>
    <alternativeName>
        <fullName evidence="1">Seryl-tRNA synthetase</fullName>
        <shortName evidence="1">SerRS</shortName>
    </alternativeName>
    <alternativeName>
        <fullName evidence="1">Seryl-tRNA(Ser/Sec) synthetase</fullName>
    </alternativeName>
</protein>
<keyword id="KW-0030">Aminoacyl-tRNA synthetase</keyword>
<keyword id="KW-0067">ATP-binding</keyword>
<keyword id="KW-0963">Cytoplasm</keyword>
<keyword id="KW-0436">Ligase</keyword>
<keyword id="KW-0547">Nucleotide-binding</keyword>
<keyword id="KW-0648">Protein biosynthesis</keyword>
<reference key="1">
    <citation type="journal article" date="2005" name="Nat. Biotechnol.">
        <title>Complete genome sequence of the plant commensal Pseudomonas fluorescens Pf-5.</title>
        <authorList>
            <person name="Paulsen I.T."/>
            <person name="Press C.M."/>
            <person name="Ravel J."/>
            <person name="Kobayashi D.Y."/>
            <person name="Myers G.S.A."/>
            <person name="Mavrodi D.V."/>
            <person name="DeBoy R.T."/>
            <person name="Seshadri R."/>
            <person name="Ren Q."/>
            <person name="Madupu R."/>
            <person name="Dodson R.J."/>
            <person name="Durkin A.S."/>
            <person name="Brinkac L.M."/>
            <person name="Daugherty S.C."/>
            <person name="Sullivan S.A."/>
            <person name="Rosovitz M.J."/>
            <person name="Gwinn M.L."/>
            <person name="Zhou L."/>
            <person name="Schneider D.J."/>
            <person name="Cartinhour S.W."/>
            <person name="Nelson W.C."/>
            <person name="Weidman J."/>
            <person name="Watkins K."/>
            <person name="Tran K."/>
            <person name="Khouri H."/>
            <person name="Pierson E.A."/>
            <person name="Pierson L.S. III"/>
            <person name="Thomashow L.S."/>
            <person name="Loper J.E."/>
        </authorList>
    </citation>
    <scope>NUCLEOTIDE SEQUENCE [LARGE SCALE GENOMIC DNA]</scope>
    <source>
        <strain>ATCC BAA-477 / NRRL B-23932 / Pf-5</strain>
    </source>
</reference>
<organism>
    <name type="scientific">Pseudomonas fluorescens (strain ATCC BAA-477 / NRRL B-23932 / Pf-5)</name>
    <dbReference type="NCBI Taxonomy" id="220664"/>
    <lineage>
        <taxon>Bacteria</taxon>
        <taxon>Pseudomonadati</taxon>
        <taxon>Pseudomonadota</taxon>
        <taxon>Gammaproteobacteria</taxon>
        <taxon>Pseudomonadales</taxon>
        <taxon>Pseudomonadaceae</taxon>
        <taxon>Pseudomonas</taxon>
    </lineage>
</organism>
<name>SYS_PSEF5</name>
<comment type="function">
    <text evidence="1">Catalyzes the attachment of serine to tRNA(Ser). Is also able to aminoacylate tRNA(Sec) with serine, to form the misacylated tRNA L-seryl-tRNA(Sec), which will be further converted into selenocysteinyl-tRNA(Sec).</text>
</comment>
<comment type="catalytic activity">
    <reaction evidence="1">
        <text>tRNA(Ser) + L-serine + ATP = L-seryl-tRNA(Ser) + AMP + diphosphate + H(+)</text>
        <dbReference type="Rhea" id="RHEA:12292"/>
        <dbReference type="Rhea" id="RHEA-COMP:9669"/>
        <dbReference type="Rhea" id="RHEA-COMP:9703"/>
        <dbReference type="ChEBI" id="CHEBI:15378"/>
        <dbReference type="ChEBI" id="CHEBI:30616"/>
        <dbReference type="ChEBI" id="CHEBI:33019"/>
        <dbReference type="ChEBI" id="CHEBI:33384"/>
        <dbReference type="ChEBI" id="CHEBI:78442"/>
        <dbReference type="ChEBI" id="CHEBI:78533"/>
        <dbReference type="ChEBI" id="CHEBI:456215"/>
        <dbReference type="EC" id="6.1.1.11"/>
    </reaction>
</comment>
<comment type="catalytic activity">
    <reaction evidence="1">
        <text>tRNA(Sec) + L-serine + ATP = L-seryl-tRNA(Sec) + AMP + diphosphate + H(+)</text>
        <dbReference type="Rhea" id="RHEA:42580"/>
        <dbReference type="Rhea" id="RHEA-COMP:9742"/>
        <dbReference type="Rhea" id="RHEA-COMP:10128"/>
        <dbReference type="ChEBI" id="CHEBI:15378"/>
        <dbReference type="ChEBI" id="CHEBI:30616"/>
        <dbReference type="ChEBI" id="CHEBI:33019"/>
        <dbReference type="ChEBI" id="CHEBI:33384"/>
        <dbReference type="ChEBI" id="CHEBI:78442"/>
        <dbReference type="ChEBI" id="CHEBI:78533"/>
        <dbReference type="ChEBI" id="CHEBI:456215"/>
        <dbReference type="EC" id="6.1.1.11"/>
    </reaction>
</comment>
<comment type="pathway">
    <text evidence="1">Aminoacyl-tRNA biosynthesis; selenocysteinyl-tRNA(Sec) biosynthesis; L-seryl-tRNA(Sec) from L-serine and tRNA(Sec): step 1/1.</text>
</comment>
<comment type="subunit">
    <text evidence="1">Homodimer. The tRNA molecule binds across the dimer.</text>
</comment>
<comment type="subcellular location">
    <subcellularLocation>
        <location evidence="1">Cytoplasm</location>
    </subcellularLocation>
</comment>
<comment type="domain">
    <text evidence="1">Consists of two distinct domains, a catalytic core and a N-terminal extension that is involved in tRNA binding.</text>
</comment>
<comment type="similarity">
    <text evidence="1">Belongs to the class-II aminoacyl-tRNA synthetase family. Type-1 seryl-tRNA synthetase subfamily.</text>
</comment>
<evidence type="ECO:0000255" key="1">
    <source>
        <dbReference type="HAMAP-Rule" id="MF_00176"/>
    </source>
</evidence>
<evidence type="ECO:0000256" key="2">
    <source>
        <dbReference type="SAM" id="MobiDB-lite"/>
    </source>
</evidence>
<accession>Q4K9V7</accession>
<proteinExistence type="inferred from homology"/>